<gene>
    <name evidence="1" type="primary">mdtK</name>
    <name type="ordered locus">ECH74115_2376</name>
</gene>
<comment type="function">
    <text evidence="1">Multidrug efflux pump that functions probably as a Na(+)/drug antiporter.</text>
</comment>
<comment type="subcellular location">
    <subcellularLocation>
        <location evidence="1">Cell inner membrane</location>
        <topology evidence="1">Multi-pass membrane protein</topology>
    </subcellularLocation>
</comment>
<comment type="similarity">
    <text evidence="1">Belongs to the multi antimicrobial extrusion (MATE) (TC 2.A.66.1) family. MdtK subfamily.</text>
</comment>
<dbReference type="EMBL" id="CP001164">
    <property type="protein sequence ID" value="ACI35889.1"/>
    <property type="molecule type" value="Genomic_DNA"/>
</dbReference>
<dbReference type="RefSeq" id="WP_001174945.1">
    <property type="nucleotide sequence ID" value="NC_011353.1"/>
</dbReference>
<dbReference type="SMR" id="B5Z497"/>
<dbReference type="KEGG" id="ecf:ECH74115_2376"/>
<dbReference type="HOGENOM" id="CLU_012893_6_0_6"/>
<dbReference type="GO" id="GO:0005886">
    <property type="term" value="C:plasma membrane"/>
    <property type="evidence" value="ECO:0007669"/>
    <property type="project" value="UniProtKB-SubCell"/>
</dbReference>
<dbReference type="GO" id="GO:0015297">
    <property type="term" value="F:antiporter activity"/>
    <property type="evidence" value="ECO:0007669"/>
    <property type="project" value="UniProtKB-UniRule"/>
</dbReference>
<dbReference type="GO" id="GO:0042910">
    <property type="term" value="F:xenobiotic transmembrane transporter activity"/>
    <property type="evidence" value="ECO:0007669"/>
    <property type="project" value="UniProtKB-UniRule"/>
</dbReference>
<dbReference type="GO" id="GO:0006814">
    <property type="term" value="P:sodium ion transport"/>
    <property type="evidence" value="ECO:0007669"/>
    <property type="project" value="UniProtKB-UniRule"/>
</dbReference>
<dbReference type="GO" id="GO:0006855">
    <property type="term" value="P:xenobiotic transmembrane transport"/>
    <property type="evidence" value="ECO:0007669"/>
    <property type="project" value="UniProtKB-UniRule"/>
</dbReference>
<dbReference type="CDD" id="cd13131">
    <property type="entry name" value="MATE_NorM_like"/>
    <property type="match status" value="1"/>
</dbReference>
<dbReference type="HAMAP" id="MF_00400">
    <property type="entry name" value="MdtK"/>
    <property type="match status" value="1"/>
</dbReference>
<dbReference type="InterPro" id="IPR002528">
    <property type="entry name" value="MATE_fam"/>
</dbReference>
<dbReference type="InterPro" id="IPR050222">
    <property type="entry name" value="MATE_MdtK"/>
</dbReference>
<dbReference type="InterPro" id="IPR048279">
    <property type="entry name" value="MdtK-like"/>
</dbReference>
<dbReference type="InterPro" id="IPR022913">
    <property type="entry name" value="Multidrug-R_MdtK"/>
</dbReference>
<dbReference type="NCBIfam" id="TIGR00797">
    <property type="entry name" value="matE"/>
    <property type="match status" value="1"/>
</dbReference>
<dbReference type="PANTHER" id="PTHR43298:SF2">
    <property type="entry name" value="FMN_FAD EXPORTER YEEO-RELATED"/>
    <property type="match status" value="1"/>
</dbReference>
<dbReference type="PANTHER" id="PTHR43298">
    <property type="entry name" value="MULTIDRUG RESISTANCE PROTEIN NORM-RELATED"/>
    <property type="match status" value="1"/>
</dbReference>
<dbReference type="Pfam" id="PF01554">
    <property type="entry name" value="MatE"/>
    <property type="match status" value="2"/>
</dbReference>
<dbReference type="PIRSF" id="PIRSF006603">
    <property type="entry name" value="DinF"/>
    <property type="match status" value="1"/>
</dbReference>
<sequence>MQKYISEARLLLALAIPVILAQIAQTAMGFVDTVMAGGYSATDMAAVAIGTSIWLPAILFGHGLLLALTPVIAQLNGSGRRERIAHQVRQGFWLAGFVSVLIMLVLWNAGYIIRSMENIDPALADKAVGYLRALLWGAPGYLFFQVARNQCEGLAKTKPGMVMGFIGLLVNIPVNYIFIYGHFGMPELGGVGCGVATAAVYWVMFLAMVSYIKRARSMRDIRNEKGTAKPDPAVMKRLIQLGLPIALALFFEVTLFAVVALLVSPLGIVDVAGHQIALNFSSLMFVLPMSLAAAVTIRVGYRLGQGSTLDAQTAARTGLMVGVCMATLTAIFTVSLREQIALLYNDNPEVVTLAAHLMLLAAVYQISDSIQVIGSGILRGYKDTRSIFYITFTAYWVLGLPSGYILALTDLVVEPMGPAGFWIGFIIGLTSAAIMMMLRMRYLQRLPSAIILQRASR</sequence>
<accession>B5Z497</accession>
<organism>
    <name type="scientific">Escherichia coli O157:H7 (strain EC4115 / EHEC)</name>
    <dbReference type="NCBI Taxonomy" id="444450"/>
    <lineage>
        <taxon>Bacteria</taxon>
        <taxon>Pseudomonadati</taxon>
        <taxon>Pseudomonadota</taxon>
        <taxon>Gammaproteobacteria</taxon>
        <taxon>Enterobacterales</taxon>
        <taxon>Enterobacteriaceae</taxon>
        <taxon>Escherichia</taxon>
    </lineage>
</organism>
<reference key="1">
    <citation type="journal article" date="2011" name="Proc. Natl. Acad. Sci. U.S.A.">
        <title>Genomic anatomy of Escherichia coli O157:H7 outbreaks.</title>
        <authorList>
            <person name="Eppinger M."/>
            <person name="Mammel M.K."/>
            <person name="Leclerc J.E."/>
            <person name="Ravel J."/>
            <person name="Cebula T.A."/>
        </authorList>
    </citation>
    <scope>NUCLEOTIDE SEQUENCE [LARGE SCALE GENOMIC DNA]</scope>
    <source>
        <strain>EC4115 / EHEC</strain>
    </source>
</reference>
<feature type="chain" id="PRO_1000191092" description="Multidrug resistance protein MdtK">
    <location>
        <begin position="1"/>
        <end position="457"/>
    </location>
</feature>
<feature type="transmembrane region" description="Helical" evidence="1">
    <location>
        <begin position="11"/>
        <end position="31"/>
    </location>
</feature>
<feature type="transmembrane region" description="Helical" evidence="1">
    <location>
        <begin position="53"/>
        <end position="73"/>
    </location>
</feature>
<feature type="transmembrane region" description="Helical" evidence="1">
    <location>
        <begin position="93"/>
        <end position="113"/>
    </location>
</feature>
<feature type="transmembrane region" description="Helical" evidence="1">
    <location>
        <begin position="127"/>
        <end position="147"/>
    </location>
</feature>
<feature type="transmembrane region" description="Helical" evidence="1">
    <location>
        <begin position="160"/>
        <end position="180"/>
    </location>
</feature>
<feature type="transmembrane region" description="Helical" evidence="1">
    <location>
        <begin position="189"/>
        <end position="209"/>
    </location>
</feature>
<feature type="transmembrane region" description="Helical" evidence="1">
    <location>
        <begin position="243"/>
        <end position="263"/>
    </location>
</feature>
<feature type="transmembrane region" description="Helical" evidence="1">
    <location>
        <begin position="276"/>
        <end position="296"/>
    </location>
</feature>
<feature type="transmembrane region" description="Helical" evidence="1">
    <location>
        <begin position="314"/>
        <end position="334"/>
    </location>
</feature>
<feature type="transmembrane region" description="Helical" evidence="1">
    <location>
        <begin position="350"/>
        <end position="370"/>
    </location>
</feature>
<feature type="transmembrane region" description="Helical" evidence="1">
    <location>
        <begin position="387"/>
        <end position="407"/>
    </location>
</feature>
<feature type="transmembrane region" description="Helical" evidence="1">
    <location>
        <begin position="418"/>
        <end position="438"/>
    </location>
</feature>
<evidence type="ECO:0000255" key="1">
    <source>
        <dbReference type="HAMAP-Rule" id="MF_00400"/>
    </source>
</evidence>
<protein>
    <recommendedName>
        <fullName evidence="1">Multidrug resistance protein MdtK</fullName>
    </recommendedName>
    <alternativeName>
        <fullName evidence="1">Multidrug-efflux transporter</fullName>
    </alternativeName>
</protein>
<keyword id="KW-0050">Antiport</keyword>
<keyword id="KW-0997">Cell inner membrane</keyword>
<keyword id="KW-1003">Cell membrane</keyword>
<keyword id="KW-0406">Ion transport</keyword>
<keyword id="KW-0472">Membrane</keyword>
<keyword id="KW-0915">Sodium</keyword>
<keyword id="KW-0739">Sodium transport</keyword>
<keyword id="KW-0812">Transmembrane</keyword>
<keyword id="KW-1133">Transmembrane helix</keyword>
<keyword id="KW-0813">Transport</keyword>
<proteinExistence type="inferred from homology"/>
<name>MDTK_ECO5E</name>